<name>NRAM_I61A1</name>
<organismHost>
    <name type="scientific">Aves</name>
    <dbReference type="NCBI Taxonomy" id="8782"/>
</organismHost>
<organismHost>
    <name type="scientific">Homo sapiens</name>
    <name type="common">Human</name>
    <dbReference type="NCBI Taxonomy" id="9606"/>
</organismHost>
<organismHost>
    <name type="scientific">Sus scrofa</name>
    <name type="common">Pig</name>
    <dbReference type="NCBI Taxonomy" id="9823"/>
</organismHost>
<protein>
    <recommendedName>
        <fullName evidence="1">Neuraminidase</fullName>
        <ecNumber evidence="1">3.2.1.18</ecNumber>
    </recommendedName>
</protein>
<sequence>MNTNQRIITIGTICLIVGIISLLLQIGNIISLWISHSIQTREKSHPEVCNQSIITYENNTWVNQTYVNISNANIVAEQGVTSIILAGNSSLCPISGWAIYSKDNSIRIGSKGDIFVIREPFISCSHLECRTFFLTQGALLNDRHSNGTVKDRSPYRTLMSCPIGEAPSPYNSRFESVAWSASACHDGMGWLTIGISGPDNGAVAVLKYNGIITDTIKSWRNKILRTQESECVCINGSCFTIMTDGPSNGQASYKIFKMEKGRIIKSIELDAPNYHYEECSCYPDTGKVVCVCRDNWHASNRPWVSFDQNLDYQIGYICSGVFGDNPRSNDGKGNCGPVLSNGANGVKGFSFRYGNGVWIGRTKSISSRSGFEMIWDPNGWTETDSSFSMKQDIIALTDWSGYSGSFVQHPELTGMDCIRPCFWVELIRGQPKENTIWTSGSSISFCGVNSGTANWSWPDGADLPFTIDK</sequence>
<dbReference type="EC" id="3.2.1.18" evidence="1"/>
<dbReference type="EMBL" id="CY032215">
    <property type="protein sequence ID" value="ACD85157.1"/>
    <property type="molecule type" value="Viral_cRNA"/>
</dbReference>
<dbReference type="SMR" id="B3EUQ9"/>
<dbReference type="CAZy" id="GH34">
    <property type="family name" value="Glycoside Hydrolase Family 34"/>
</dbReference>
<dbReference type="GlyCosmos" id="B3EUQ9">
    <property type="glycosylation" value="8 sites, No reported glycans"/>
</dbReference>
<dbReference type="PRO" id="PR:B3EUQ9"/>
<dbReference type="Proteomes" id="UP000007769">
    <property type="component" value="Genome"/>
</dbReference>
<dbReference type="GO" id="GO:0020002">
    <property type="term" value="C:host cell plasma membrane"/>
    <property type="evidence" value="ECO:0007669"/>
    <property type="project" value="UniProtKB-SubCell"/>
</dbReference>
<dbReference type="GO" id="GO:0016020">
    <property type="term" value="C:membrane"/>
    <property type="evidence" value="ECO:0007669"/>
    <property type="project" value="UniProtKB-UniRule"/>
</dbReference>
<dbReference type="GO" id="GO:0055036">
    <property type="term" value="C:virion membrane"/>
    <property type="evidence" value="ECO:0007669"/>
    <property type="project" value="UniProtKB-SubCell"/>
</dbReference>
<dbReference type="GO" id="GO:0004308">
    <property type="term" value="F:exo-alpha-sialidase activity"/>
    <property type="evidence" value="ECO:0007669"/>
    <property type="project" value="UniProtKB-UniRule"/>
</dbReference>
<dbReference type="GO" id="GO:0046872">
    <property type="term" value="F:metal ion binding"/>
    <property type="evidence" value="ECO:0007669"/>
    <property type="project" value="UniProtKB-UniRule"/>
</dbReference>
<dbReference type="GO" id="GO:0005975">
    <property type="term" value="P:carbohydrate metabolic process"/>
    <property type="evidence" value="ECO:0007669"/>
    <property type="project" value="InterPro"/>
</dbReference>
<dbReference type="GO" id="GO:0046761">
    <property type="term" value="P:viral budding from plasma membrane"/>
    <property type="evidence" value="ECO:0007669"/>
    <property type="project" value="UniProtKB-UniRule"/>
</dbReference>
<dbReference type="CDD" id="cd15483">
    <property type="entry name" value="Influenza_NA"/>
    <property type="match status" value="1"/>
</dbReference>
<dbReference type="FunFam" id="2.120.10.10:FF:000001">
    <property type="entry name" value="Neuraminidase"/>
    <property type="match status" value="1"/>
</dbReference>
<dbReference type="Gene3D" id="2.120.10.10">
    <property type="match status" value="1"/>
</dbReference>
<dbReference type="HAMAP" id="MF_04071">
    <property type="entry name" value="INFV_NRAM"/>
    <property type="match status" value="1"/>
</dbReference>
<dbReference type="InterPro" id="IPR001860">
    <property type="entry name" value="Glyco_hydro_34"/>
</dbReference>
<dbReference type="InterPro" id="IPR033654">
    <property type="entry name" value="Sialidase_Influenza_A/B"/>
</dbReference>
<dbReference type="InterPro" id="IPR036278">
    <property type="entry name" value="Sialidase_sf"/>
</dbReference>
<dbReference type="Pfam" id="PF00064">
    <property type="entry name" value="Neur"/>
    <property type="match status" value="1"/>
</dbReference>
<dbReference type="SUPFAM" id="SSF50939">
    <property type="entry name" value="Sialidases"/>
    <property type="match status" value="1"/>
</dbReference>
<accession>B3EUQ9</accession>
<feature type="chain" id="PRO_0000372971" description="Neuraminidase">
    <location>
        <begin position="1"/>
        <end position="469"/>
    </location>
</feature>
<feature type="topological domain" description="Intravirion" evidence="1">
    <location>
        <begin position="1"/>
        <end position="6"/>
    </location>
</feature>
<feature type="transmembrane region" description="Helical" evidence="1">
    <location>
        <begin position="7"/>
        <end position="27"/>
    </location>
</feature>
<feature type="topological domain" description="Virion surface" evidence="1">
    <location>
        <begin position="28"/>
        <end position="469"/>
    </location>
</feature>
<feature type="region of interest" description="Involved in apical transport and lipid raft association" evidence="1">
    <location>
        <begin position="11"/>
        <end position="33"/>
    </location>
</feature>
<feature type="region of interest" description="Hypervariable stalk region" evidence="1">
    <location>
        <begin position="36"/>
        <end position="90"/>
    </location>
</feature>
<feature type="region of interest" description="Head of neuraminidase" evidence="1">
    <location>
        <begin position="91"/>
        <end position="469"/>
    </location>
</feature>
<feature type="active site" description="Proton donor/acceptor" evidence="1">
    <location>
        <position position="151"/>
    </location>
</feature>
<feature type="active site" description="Nucleophile" evidence="1">
    <location>
        <position position="402"/>
    </location>
</feature>
<feature type="binding site" evidence="1">
    <location>
        <position position="118"/>
    </location>
    <ligand>
        <name>substrate</name>
    </ligand>
</feature>
<feature type="binding site" evidence="1">
    <location>
        <position position="152"/>
    </location>
    <ligand>
        <name>substrate</name>
    </ligand>
</feature>
<feature type="binding site" evidence="1">
    <location>
        <begin position="277"/>
        <end position="278"/>
    </location>
    <ligand>
        <name>substrate</name>
    </ligand>
</feature>
<feature type="binding site" evidence="1">
    <location>
        <position position="293"/>
    </location>
    <ligand>
        <name>substrate</name>
    </ligand>
</feature>
<feature type="binding site" evidence="1">
    <location>
        <position position="294"/>
    </location>
    <ligand>
        <name>Ca(2+)</name>
        <dbReference type="ChEBI" id="CHEBI:29108"/>
    </ligand>
</feature>
<feature type="binding site" evidence="1">
    <location>
        <position position="324"/>
    </location>
    <ligand>
        <name>Ca(2+)</name>
        <dbReference type="ChEBI" id="CHEBI:29108"/>
    </ligand>
</feature>
<feature type="binding site" evidence="1">
    <location>
        <position position="344"/>
    </location>
    <ligand>
        <name>Ca(2+)</name>
        <dbReference type="ChEBI" id="CHEBI:29108"/>
    </ligand>
</feature>
<feature type="binding site" evidence="1">
    <location>
        <position position="368"/>
    </location>
    <ligand>
        <name>substrate</name>
    </ligand>
</feature>
<feature type="glycosylation site" description="N-linked (GlcNAc...) asparagine; by host" evidence="1">
    <location>
        <position position="50"/>
    </location>
</feature>
<feature type="glycosylation site" description="N-linked (GlcNAc...) asparagine; by host" evidence="1">
    <location>
        <position position="58"/>
    </location>
</feature>
<feature type="glycosylation site" description="N-linked (GlcNAc...) asparagine; by host" evidence="1">
    <location>
        <position position="63"/>
    </location>
</feature>
<feature type="glycosylation site" description="N-linked (GlcNAc...) asparagine; by host" evidence="1">
    <location>
        <position position="68"/>
    </location>
</feature>
<feature type="glycosylation site" description="N-linked (GlcNAc...) asparagine; by host" evidence="1">
    <location>
        <position position="88"/>
    </location>
</feature>
<feature type="glycosylation site" description="N-linked (GlcNAc...) asparagine; by host" evidence="1">
    <location>
        <position position="146"/>
    </location>
</feature>
<feature type="glycosylation site" description="N-linked (GlcNAc...) asparagine; by host" evidence="1">
    <location>
        <position position="235"/>
    </location>
</feature>
<feature type="glycosylation site" description="N-linked (GlcNAc...) asparagine; by host" evidence="1">
    <location>
        <position position="454"/>
    </location>
</feature>
<feature type="disulfide bond" evidence="1">
    <location>
        <begin position="92"/>
        <end position="417"/>
    </location>
</feature>
<feature type="disulfide bond" evidence="1">
    <location>
        <begin position="124"/>
        <end position="129"/>
    </location>
</feature>
<feature type="disulfide bond" evidence="1">
    <location>
        <begin position="184"/>
        <end position="231"/>
    </location>
</feature>
<feature type="disulfide bond" evidence="1">
    <location>
        <begin position="233"/>
        <end position="238"/>
    </location>
</feature>
<feature type="disulfide bond" evidence="1">
    <location>
        <begin position="279"/>
        <end position="292"/>
    </location>
</feature>
<feature type="disulfide bond" evidence="1">
    <location>
        <begin position="281"/>
        <end position="290"/>
    </location>
</feature>
<feature type="disulfide bond" evidence="1">
    <location>
        <begin position="318"/>
        <end position="335"/>
    </location>
</feature>
<feature type="disulfide bond" evidence="1">
    <location>
        <begin position="421"/>
        <end position="446"/>
    </location>
</feature>
<gene>
    <name evidence="1" type="primary">NA</name>
</gene>
<comment type="function">
    <text evidence="1">Catalyzes the removal of terminal sialic acid residues from viral and cellular glycoconjugates. Cleaves off the terminal sialic acids on the glycosylated HA during virus budding to facilitate virus release. Additionally helps virus spread through the circulation by further removing sialic acids from the cell surface. These cleavages prevent self-aggregation and ensure the efficient spread of the progeny virus from cell to cell. Otherwise, infection would be limited to one round of replication. Described as a receptor-destroying enzyme because it cleaves a terminal sialic acid from the cellular receptors. May facilitate viral invasion of the upper airways by cleaving the sialic acid moieties on the mucin of the airway epithelial cells. Likely to plays a role in the budding process through its association with lipid rafts during intracellular transport. May additionally display a raft-association independent effect on budding. Plays a role in the determination of host range restriction on replication and virulence. Sialidase activity in late endosome/lysosome traffic seems to enhance virus replication.</text>
</comment>
<comment type="catalytic activity">
    <reaction evidence="1">
        <text>Hydrolysis of alpha-(2-&gt;3)-, alpha-(2-&gt;6)-, alpha-(2-&gt;8)- glycosidic linkages of terminal sialic acid residues in oligosaccharides, glycoproteins, glycolipids, colominic acid and synthetic substrates.</text>
        <dbReference type="EC" id="3.2.1.18"/>
    </reaction>
</comment>
<comment type="cofactor">
    <cofactor evidence="1">
        <name>Ca(2+)</name>
        <dbReference type="ChEBI" id="CHEBI:29108"/>
    </cofactor>
</comment>
<comment type="activity regulation">
    <text evidence="1">Inhibited by the neuraminidase inhibitors zanamivir (Relenza) and oseltamivir (Tamiflu). These drugs interfere with the release of progeny virus from infected cells and are effective against all influenza strains. Resistance to neuraminidase inhibitors is quite rare.</text>
</comment>
<comment type="subunit">
    <text evidence="1">Homotetramer.</text>
</comment>
<comment type="subcellular location">
    <subcellularLocation>
        <location evidence="1">Virion membrane</location>
    </subcellularLocation>
    <subcellularLocation>
        <location evidence="1">Host apical cell membrane</location>
        <topology evidence="1">Single-pass type II membrane protein</topology>
    </subcellularLocation>
    <text evidence="1">Preferentially accumulates at the apical plasma membrane in infected polarized epithelial cells, which is the virus assembly site. Uses lipid rafts for cell surface transport and apical sorting. In the virion, forms a mushroom-shaped spike on the surface of the membrane.</text>
</comment>
<comment type="domain">
    <text evidence="1">Intact N-terminus is essential for virion morphogenesis. Possesses two apical sorting signals, one in the ectodomain, which is likely to be a glycan, and the other in the transmembrane domain. The transmembrane domain also plays a role in lipid raft association.</text>
</comment>
<comment type="PTM">
    <text evidence="1">N-glycosylated.</text>
</comment>
<comment type="miscellaneous">
    <text>The influenza A genome consist of 8 RNA segments. Genetic variation of hemagglutinin and/or neuraminidase genes results in the emergence of new influenza strains. The mechanism of variation can be the result of point mutations or the result of genetic reassortment between segments of two different strains.</text>
</comment>
<comment type="similarity">
    <text evidence="1">Belongs to the glycosyl hydrolase 34 family.</text>
</comment>
<organism>
    <name type="scientific">Influenza A virus (strain A/Swine/Wisconsin/1/1961 H1N1)</name>
    <dbReference type="NCBI Taxonomy" id="383533"/>
    <lineage>
        <taxon>Viruses</taxon>
        <taxon>Riboviria</taxon>
        <taxon>Orthornavirae</taxon>
        <taxon>Negarnaviricota</taxon>
        <taxon>Polyploviricotina</taxon>
        <taxon>Insthoviricetes</taxon>
        <taxon>Articulavirales</taxon>
        <taxon>Orthomyxoviridae</taxon>
        <taxon>Alphainfluenzavirus</taxon>
        <taxon>Alphainfluenzavirus influenzae</taxon>
        <taxon>Influenza A virus</taxon>
    </lineage>
</organism>
<evidence type="ECO:0000255" key="1">
    <source>
        <dbReference type="HAMAP-Rule" id="MF_04071"/>
    </source>
</evidence>
<proteinExistence type="inferred from homology"/>
<reference key="1">
    <citation type="submission" date="2008-06" db="EMBL/GenBank/DDBJ databases">
        <title>The NIAID influenza genome sequencing project.</title>
        <authorList>
            <person name="Spiro D."/>
            <person name="Halpin R."/>
            <person name="Boyne A."/>
            <person name="Bera J."/>
            <person name="Ghedin E."/>
            <person name="Hostetler J."/>
            <person name="Fedorova N."/>
            <person name="Kim M."/>
            <person name="Zaborsky J."/>
            <person name="Overton L."/>
            <person name="Djuric K."/>
            <person name="Sarmiento M."/>
            <person name="Sitz J."/>
            <person name="Katzel D."/>
            <person name="Webster R.G."/>
            <person name="Hoffmann E."/>
            <person name="Krauss S."/>
            <person name="Naeve C."/>
            <person name="Bolotov P."/>
            <person name="Bao Y."/>
            <person name="Sanders R."/>
            <person name="Dernovoy D."/>
            <person name="Kiryutin B."/>
            <person name="Lipman D.J."/>
            <person name="Tatusova T."/>
        </authorList>
    </citation>
    <scope>NUCLEOTIDE SEQUENCE [GENOMIC RNA]</scope>
</reference>
<reference key="2">
    <citation type="submission" date="2008-06" db="EMBL/GenBank/DDBJ databases">
        <authorList>
            <consortium name="The NIAID Influenza Genome Sequencing Consortium"/>
        </authorList>
    </citation>
    <scope>NUCLEOTIDE SEQUENCE [GENOMIC RNA]</scope>
</reference>
<keyword id="KW-0106">Calcium</keyword>
<keyword id="KW-1015">Disulfide bond</keyword>
<keyword id="KW-0325">Glycoprotein</keyword>
<keyword id="KW-0326">Glycosidase</keyword>
<keyword id="KW-1032">Host cell membrane</keyword>
<keyword id="KW-1043">Host membrane</keyword>
<keyword id="KW-0378">Hydrolase</keyword>
<keyword id="KW-0472">Membrane</keyword>
<keyword id="KW-0479">Metal-binding</keyword>
<keyword id="KW-0735">Signal-anchor</keyword>
<keyword id="KW-0812">Transmembrane</keyword>
<keyword id="KW-1133">Transmembrane helix</keyword>
<keyword id="KW-0946">Virion</keyword>